<keyword id="KW-0963">Cytoplasm</keyword>
<keyword id="KW-0456">Lyase</keyword>
<keyword id="KW-0539">Nucleus</keyword>
<keyword id="KW-1185">Reference proteome</keyword>
<keyword id="KW-0346">Stress response</keyword>
<sequence length="244" mass="26743">MASEGKVLLVASSYYGPFYPDGMNTGVHFAELLIPYQVFREAGYEVQLTSETGKCKFDDHSIKKSALGEVERDAFDNKDNEFWYALKDIKPADKINYKEFCIMFIAGGHAAMFDLPHATNLQTLAQQIYASNGVLAAVCHGPVMLPFVDDTKSPEGRSVVYGKKVTAFNSTGELVMGVSSALRERNMQDLNSLFREAGAEFVDPPTPMSDFTQVDGRIVTGVNPMSAKSTAEAAIKVSQSLRKT</sequence>
<name>HSP31_SCHPO</name>
<gene>
    <name evidence="4" type="primary">hsp3101</name>
    <name evidence="7" type="ORF">SPCC757.03c</name>
</gene>
<dbReference type="EC" id="4.2.1.130" evidence="3"/>
<dbReference type="EMBL" id="CU329672">
    <property type="protein sequence ID" value="CAA21228.1"/>
    <property type="molecule type" value="Genomic_DNA"/>
</dbReference>
<dbReference type="PIR" id="T41594">
    <property type="entry name" value="T41594"/>
</dbReference>
<dbReference type="RefSeq" id="NP_587678.1">
    <property type="nucleotide sequence ID" value="NM_001022673.2"/>
</dbReference>
<dbReference type="SMR" id="O74914"/>
<dbReference type="BioGRID" id="276029">
    <property type="interactions" value="2"/>
</dbReference>
<dbReference type="FunCoup" id="O74914">
    <property type="interactions" value="332"/>
</dbReference>
<dbReference type="STRING" id="284812.O74914"/>
<dbReference type="MEROPS" id="C56.A05"/>
<dbReference type="iPTMnet" id="O74914"/>
<dbReference type="PaxDb" id="4896-SPCC757.03c.1"/>
<dbReference type="EnsemblFungi" id="SPCC757.03c.1">
    <property type="protein sequence ID" value="SPCC757.03c.1:pep"/>
    <property type="gene ID" value="SPCC757.03c"/>
</dbReference>
<dbReference type="GeneID" id="2539466"/>
<dbReference type="KEGG" id="spo:2539466"/>
<dbReference type="PomBase" id="SPCC757.03c">
    <property type="gene designation" value="hsp3101"/>
</dbReference>
<dbReference type="VEuPathDB" id="FungiDB:SPCC757.03c"/>
<dbReference type="eggNOG" id="ENOG502RZ3Y">
    <property type="taxonomic scope" value="Eukaryota"/>
</dbReference>
<dbReference type="HOGENOM" id="CLU_070319_1_0_1"/>
<dbReference type="InParanoid" id="O74914"/>
<dbReference type="OMA" id="FWVINER"/>
<dbReference type="PhylomeDB" id="O74914"/>
<dbReference type="BRENDA" id="4.2.1.130">
    <property type="organism ID" value="5613"/>
</dbReference>
<dbReference type="PRO" id="PR:O74914"/>
<dbReference type="Proteomes" id="UP000002485">
    <property type="component" value="Chromosome III"/>
</dbReference>
<dbReference type="GO" id="GO:0005737">
    <property type="term" value="C:cytoplasm"/>
    <property type="evidence" value="ECO:0000314"/>
    <property type="project" value="PomBase"/>
</dbReference>
<dbReference type="GO" id="GO:0005829">
    <property type="term" value="C:cytosol"/>
    <property type="evidence" value="ECO:0007005"/>
    <property type="project" value="PomBase"/>
</dbReference>
<dbReference type="GO" id="GO:0005634">
    <property type="term" value="C:nucleus"/>
    <property type="evidence" value="ECO:0000314"/>
    <property type="project" value="PomBase"/>
</dbReference>
<dbReference type="GO" id="GO:0019172">
    <property type="term" value="F:glyoxalase III activity"/>
    <property type="evidence" value="ECO:0000314"/>
    <property type="project" value="PomBase"/>
</dbReference>
<dbReference type="GO" id="GO:1990748">
    <property type="term" value="P:cellular detoxification"/>
    <property type="evidence" value="ECO:0000303"/>
    <property type="project" value="PomBase"/>
</dbReference>
<dbReference type="GO" id="GO:0019243">
    <property type="term" value="P:methylglyoxal catabolic process to D-lactate via S-lactoyl-glutathione"/>
    <property type="evidence" value="ECO:0000318"/>
    <property type="project" value="GO_Central"/>
</dbReference>
<dbReference type="CDD" id="cd03147">
    <property type="entry name" value="GATase1_Ydr533c_like"/>
    <property type="match status" value="1"/>
</dbReference>
<dbReference type="FunFam" id="3.40.50.880:FF:000051">
    <property type="entry name" value="Glutathione-independent glyoxalase HSP31"/>
    <property type="match status" value="1"/>
</dbReference>
<dbReference type="Gene3D" id="3.40.50.880">
    <property type="match status" value="1"/>
</dbReference>
<dbReference type="InterPro" id="IPR029062">
    <property type="entry name" value="Class_I_gatase-like"/>
</dbReference>
<dbReference type="InterPro" id="IPR002818">
    <property type="entry name" value="DJ-1/PfpI"/>
</dbReference>
<dbReference type="InterPro" id="IPR050325">
    <property type="entry name" value="Prot/Nucl_acid_deglycase"/>
</dbReference>
<dbReference type="PANTHER" id="PTHR48094:SF24">
    <property type="entry name" value="GLUTATHIONE-INDEPENDENT GLYOXALASE HSP3101-RELATED"/>
    <property type="match status" value="1"/>
</dbReference>
<dbReference type="PANTHER" id="PTHR48094">
    <property type="entry name" value="PROTEIN/NUCLEIC ACID DEGLYCASE DJ-1-RELATED"/>
    <property type="match status" value="1"/>
</dbReference>
<dbReference type="Pfam" id="PF01965">
    <property type="entry name" value="DJ-1_PfpI"/>
    <property type="match status" value="1"/>
</dbReference>
<dbReference type="SUPFAM" id="SSF52317">
    <property type="entry name" value="Class I glutamine amidotransferase-like"/>
    <property type="match status" value="1"/>
</dbReference>
<evidence type="ECO:0000250" key="1">
    <source>
        <dbReference type="UniProtKB" id="Q04432"/>
    </source>
</evidence>
<evidence type="ECO:0000269" key="2">
    <source>
    </source>
</evidence>
<evidence type="ECO:0000269" key="3">
    <source>
    </source>
</evidence>
<evidence type="ECO:0000303" key="4">
    <source>
    </source>
</evidence>
<evidence type="ECO:0000305" key="5"/>
<evidence type="ECO:0000305" key="6">
    <source>
    </source>
</evidence>
<evidence type="ECO:0000312" key="7">
    <source>
        <dbReference type="PomBase" id="SPCC757.03c"/>
    </source>
</evidence>
<reference key="1">
    <citation type="journal article" date="2002" name="Nature">
        <title>The genome sequence of Schizosaccharomyces pombe.</title>
        <authorList>
            <person name="Wood V."/>
            <person name="Gwilliam R."/>
            <person name="Rajandream M.A."/>
            <person name="Lyne M.H."/>
            <person name="Lyne R."/>
            <person name="Stewart A."/>
            <person name="Sgouros J.G."/>
            <person name="Peat N."/>
            <person name="Hayles J."/>
            <person name="Baker S.G."/>
            <person name="Basham D."/>
            <person name="Bowman S."/>
            <person name="Brooks K."/>
            <person name="Brown D."/>
            <person name="Brown S."/>
            <person name="Chillingworth T."/>
            <person name="Churcher C.M."/>
            <person name="Collins M."/>
            <person name="Connor R."/>
            <person name="Cronin A."/>
            <person name="Davis P."/>
            <person name="Feltwell T."/>
            <person name="Fraser A."/>
            <person name="Gentles S."/>
            <person name="Goble A."/>
            <person name="Hamlin N."/>
            <person name="Harris D.E."/>
            <person name="Hidalgo J."/>
            <person name="Hodgson G."/>
            <person name="Holroyd S."/>
            <person name="Hornsby T."/>
            <person name="Howarth S."/>
            <person name="Huckle E.J."/>
            <person name="Hunt S."/>
            <person name="Jagels K."/>
            <person name="James K.D."/>
            <person name="Jones L."/>
            <person name="Jones M."/>
            <person name="Leather S."/>
            <person name="McDonald S."/>
            <person name="McLean J."/>
            <person name="Mooney P."/>
            <person name="Moule S."/>
            <person name="Mungall K.L."/>
            <person name="Murphy L.D."/>
            <person name="Niblett D."/>
            <person name="Odell C."/>
            <person name="Oliver K."/>
            <person name="O'Neil S."/>
            <person name="Pearson D."/>
            <person name="Quail M.A."/>
            <person name="Rabbinowitsch E."/>
            <person name="Rutherford K.M."/>
            <person name="Rutter S."/>
            <person name="Saunders D."/>
            <person name="Seeger K."/>
            <person name="Sharp S."/>
            <person name="Skelton J."/>
            <person name="Simmonds M.N."/>
            <person name="Squares R."/>
            <person name="Squares S."/>
            <person name="Stevens K."/>
            <person name="Taylor K."/>
            <person name="Taylor R.G."/>
            <person name="Tivey A."/>
            <person name="Walsh S.V."/>
            <person name="Warren T."/>
            <person name="Whitehead S."/>
            <person name="Woodward J.R."/>
            <person name="Volckaert G."/>
            <person name="Aert R."/>
            <person name="Robben J."/>
            <person name="Grymonprez B."/>
            <person name="Weltjens I."/>
            <person name="Vanstreels E."/>
            <person name="Rieger M."/>
            <person name="Schaefer M."/>
            <person name="Mueller-Auer S."/>
            <person name="Gabel C."/>
            <person name="Fuchs M."/>
            <person name="Duesterhoeft A."/>
            <person name="Fritzc C."/>
            <person name="Holzer E."/>
            <person name="Moestl D."/>
            <person name="Hilbert H."/>
            <person name="Borzym K."/>
            <person name="Langer I."/>
            <person name="Beck A."/>
            <person name="Lehrach H."/>
            <person name="Reinhardt R."/>
            <person name="Pohl T.M."/>
            <person name="Eger P."/>
            <person name="Zimmermann W."/>
            <person name="Wedler H."/>
            <person name="Wambutt R."/>
            <person name="Purnelle B."/>
            <person name="Goffeau A."/>
            <person name="Cadieu E."/>
            <person name="Dreano S."/>
            <person name="Gloux S."/>
            <person name="Lelaure V."/>
            <person name="Mottier S."/>
            <person name="Galibert F."/>
            <person name="Aves S.J."/>
            <person name="Xiang Z."/>
            <person name="Hunt C."/>
            <person name="Moore K."/>
            <person name="Hurst S.M."/>
            <person name="Lucas M."/>
            <person name="Rochet M."/>
            <person name="Gaillardin C."/>
            <person name="Tallada V.A."/>
            <person name="Garzon A."/>
            <person name="Thode G."/>
            <person name="Daga R.R."/>
            <person name="Cruzado L."/>
            <person name="Jimenez J."/>
            <person name="Sanchez M."/>
            <person name="del Rey F."/>
            <person name="Benito J."/>
            <person name="Dominguez A."/>
            <person name="Revuelta J.L."/>
            <person name="Moreno S."/>
            <person name="Armstrong J."/>
            <person name="Forsburg S.L."/>
            <person name="Cerutti L."/>
            <person name="Lowe T."/>
            <person name="McCombie W.R."/>
            <person name="Paulsen I."/>
            <person name="Potashkin J."/>
            <person name="Shpakovski G.V."/>
            <person name="Ussery D."/>
            <person name="Barrell B.G."/>
            <person name="Nurse P."/>
        </authorList>
    </citation>
    <scope>NUCLEOTIDE SEQUENCE [LARGE SCALE GENOMIC DNA]</scope>
    <source>
        <strain>972 / ATCC 24843</strain>
    </source>
</reference>
<reference key="2">
    <citation type="journal article" date="2006" name="Nat. Biotechnol.">
        <title>ORFeome cloning and global analysis of protein localization in the fission yeast Schizosaccharomyces pombe.</title>
        <authorList>
            <person name="Matsuyama A."/>
            <person name="Arai R."/>
            <person name="Yashiroda Y."/>
            <person name="Shirai A."/>
            <person name="Kamata A."/>
            <person name="Sekido S."/>
            <person name="Kobayashi Y."/>
            <person name="Hashimoto A."/>
            <person name="Hamamoto M."/>
            <person name="Hiraoka Y."/>
            <person name="Horinouchi S."/>
            <person name="Yoshida M."/>
        </authorList>
    </citation>
    <scope>SUBCELLULAR LOCATION [LARGE SCALE ANALYSIS]</scope>
</reference>
<reference key="3">
    <citation type="journal article" date="2014" name="BMC Evol. Biol.">
        <title>Identification of glutathione (GSH)-independent glyoxalase III from Schizosaccharomyces pombe.</title>
        <authorList>
            <person name="Zhao Q."/>
            <person name="Su Y."/>
            <person name="Wang Z."/>
            <person name="Chen C."/>
            <person name="Wu T."/>
            <person name="Huang Y."/>
        </authorList>
    </citation>
    <scope>FUNCTION</scope>
    <scope>CATALYTIC ACTIVITY</scope>
    <scope>BIOPHYSICOCHEMICAL PROPERTIES</scope>
    <scope>SUBCELLULAR LOCATION</scope>
</reference>
<proteinExistence type="evidence at protein level"/>
<comment type="function">
    <text evidence="1 3">Catalyzes the conversion of methylglyoxal (MG) to D-lactate in a single glutathione (GSH)-independent step (PubMed:24758716). May play a role in detoxifying endogenously produced glyoxals. Involved in protection against reactive oxygen species (ROS) (By similarity).</text>
</comment>
<comment type="catalytic activity">
    <reaction evidence="3">
        <text>methylglyoxal + H2O = (R)-lactate + H(+)</text>
        <dbReference type="Rhea" id="RHEA:27754"/>
        <dbReference type="ChEBI" id="CHEBI:15377"/>
        <dbReference type="ChEBI" id="CHEBI:15378"/>
        <dbReference type="ChEBI" id="CHEBI:16004"/>
        <dbReference type="ChEBI" id="CHEBI:17158"/>
        <dbReference type="EC" id="4.2.1.130"/>
    </reaction>
</comment>
<comment type="biophysicochemical properties">
    <kinetics>
        <KM evidence="3">1.4 mM for methylglyoxal</KM>
        <text evidence="3">kcat is 31.1 min(-1) with methylglyoxal as substrate.</text>
    </kinetics>
</comment>
<comment type="subcellular location">
    <subcellularLocation>
        <location evidence="2 3">Cytoplasm</location>
    </subcellularLocation>
    <subcellularLocation>
        <location evidence="2 3">Nucleus</location>
    </subcellularLocation>
</comment>
<comment type="similarity">
    <text evidence="5">Belongs to the peptidase C56 family. HSP31-like subfamily.</text>
</comment>
<organism>
    <name type="scientific">Schizosaccharomyces pombe (strain 972 / ATCC 24843)</name>
    <name type="common">Fission yeast</name>
    <dbReference type="NCBI Taxonomy" id="284812"/>
    <lineage>
        <taxon>Eukaryota</taxon>
        <taxon>Fungi</taxon>
        <taxon>Dikarya</taxon>
        <taxon>Ascomycota</taxon>
        <taxon>Taphrinomycotina</taxon>
        <taxon>Schizosaccharomycetes</taxon>
        <taxon>Schizosaccharomycetales</taxon>
        <taxon>Schizosaccharomycetaceae</taxon>
        <taxon>Schizosaccharomyces</taxon>
    </lineage>
</organism>
<protein>
    <recommendedName>
        <fullName evidence="4">Glutathione-independent glyoxalase hsp3101</fullName>
        <ecNumber evidence="3">4.2.1.130</ecNumber>
    </recommendedName>
    <alternativeName>
        <fullName evidence="6">Glyoxalase 3 homolog 1</fullName>
    </alternativeName>
    <alternativeName>
        <fullName evidence="4">Heat shock protein 31 homolog 1</fullName>
    </alternativeName>
</protein>
<accession>O74914</accession>
<feature type="chain" id="PRO_0000317306" description="Glutathione-independent glyoxalase hsp3101">
    <location>
        <begin position="1"/>
        <end position="244"/>
    </location>
</feature>
<feature type="active site" evidence="1">
    <location>
        <position position="139"/>
    </location>
</feature>
<feature type="active site" evidence="1">
    <location>
        <position position="140"/>
    </location>
</feature>
<feature type="active site" evidence="1">
    <location>
        <position position="173"/>
    </location>
</feature>